<proteinExistence type="inferred from homology"/>
<accession>P9WGS0</accession>
<accession>L0T756</accession>
<accession>P66779</accession>
<accession>Q10783</accession>
<sequence length="341" mass="36821">MNLGDLTNFVEKPLAAVSNIVNTPNSAGRYRPFYLRNLLDAVQGRNLNDAVKGKVVLITGGSSGIGAAAAKKIAEAGGTVVLVARTLENLENVANDIRAIRGNGGTAHVYPCDLSDMDAIAVMADQVLGDLGGVDILINNAGRSIRRSLELSYDRIHDYQRTMQLNYLGAVQLILKFIPGMRERHFGHIVNVSSVGVQTRAPRFGAYIASKAALDSLCDALQAETVHDNVRFTTVHMALVRTPMISPTTIYDKFPTLTPDQAAGVITDAIVHRPRRASSPFGQFAAVADAVNPAVMDRVRNRAFNMFGDSSAAKGSESQTDTSELDKRSETFVRATRGIHW</sequence>
<name>Y1543_MYCTO</name>
<feature type="chain" id="PRO_0000428313" description="Uncharacterized oxidoreductase MT1595">
    <location>
        <begin position="1"/>
        <end position="341"/>
    </location>
</feature>
<feature type="region of interest" description="Disordered" evidence="2">
    <location>
        <begin position="309"/>
        <end position="329"/>
    </location>
</feature>
<feature type="active site" description="Proton acceptor" evidence="1">
    <location>
        <position position="207"/>
    </location>
</feature>
<feature type="binding site" evidence="1">
    <location>
        <begin position="58"/>
        <end position="82"/>
    </location>
    <ligand>
        <name>NADP(+)</name>
        <dbReference type="ChEBI" id="CHEBI:58349"/>
    </ligand>
</feature>
<feature type="binding site" evidence="1">
    <location>
        <position position="194"/>
    </location>
    <ligand>
        <name>substrate</name>
    </ligand>
</feature>
<keyword id="KW-0560">Oxidoreductase</keyword>
<keyword id="KW-1185">Reference proteome</keyword>
<gene>
    <name type="ordered locus">MT1595</name>
</gene>
<dbReference type="EC" id="1.-.-.-"/>
<dbReference type="EMBL" id="AE000516">
    <property type="protein sequence ID" value="AAK45861.1"/>
    <property type="status" value="ALT_INIT"/>
    <property type="molecule type" value="Genomic_DNA"/>
</dbReference>
<dbReference type="PIR" id="D70761">
    <property type="entry name" value="D70761"/>
</dbReference>
<dbReference type="RefSeq" id="WP_003407734.1">
    <property type="nucleotide sequence ID" value="NZ_KK341227.1"/>
</dbReference>
<dbReference type="SMR" id="P9WGS0"/>
<dbReference type="KEGG" id="mtc:MT1595"/>
<dbReference type="PATRIC" id="fig|83331.31.peg.1716"/>
<dbReference type="HOGENOM" id="CLU_010194_2_1_11"/>
<dbReference type="Proteomes" id="UP000001020">
    <property type="component" value="Chromosome"/>
</dbReference>
<dbReference type="GO" id="GO:0016020">
    <property type="term" value="C:membrane"/>
    <property type="evidence" value="ECO:0007669"/>
    <property type="project" value="TreeGrafter"/>
</dbReference>
<dbReference type="GO" id="GO:0016491">
    <property type="term" value="F:oxidoreductase activity"/>
    <property type="evidence" value="ECO:0007669"/>
    <property type="project" value="UniProtKB-KW"/>
</dbReference>
<dbReference type="CDD" id="cd05233">
    <property type="entry name" value="SDR_c"/>
    <property type="match status" value="1"/>
</dbReference>
<dbReference type="FunFam" id="3.40.50.720:FF:000601">
    <property type="entry name" value="Fatty acyl-CoA reductase"/>
    <property type="match status" value="1"/>
</dbReference>
<dbReference type="Gene3D" id="3.40.50.720">
    <property type="entry name" value="NAD(P)-binding Rossmann-like Domain"/>
    <property type="match status" value="1"/>
</dbReference>
<dbReference type="InterPro" id="IPR036291">
    <property type="entry name" value="NAD(P)-bd_dom_sf"/>
</dbReference>
<dbReference type="InterPro" id="IPR002347">
    <property type="entry name" value="SDR_fam"/>
</dbReference>
<dbReference type="PANTHER" id="PTHR44196">
    <property type="entry name" value="DEHYDROGENASE/REDUCTASE SDR FAMILY MEMBER 7B"/>
    <property type="match status" value="1"/>
</dbReference>
<dbReference type="PANTHER" id="PTHR44196:SF1">
    <property type="entry name" value="DEHYDROGENASE_REDUCTASE SDR FAMILY MEMBER 7B"/>
    <property type="match status" value="1"/>
</dbReference>
<dbReference type="Pfam" id="PF00106">
    <property type="entry name" value="adh_short"/>
    <property type="match status" value="1"/>
</dbReference>
<dbReference type="PRINTS" id="PR00081">
    <property type="entry name" value="GDHRDH"/>
</dbReference>
<dbReference type="PRINTS" id="PR00080">
    <property type="entry name" value="SDRFAMILY"/>
</dbReference>
<dbReference type="SMART" id="SM00822">
    <property type="entry name" value="PKS_KR"/>
    <property type="match status" value="1"/>
</dbReference>
<dbReference type="SUPFAM" id="SSF51735">
    <property type="entry name" value="NAD(P)-binding Rossmann-fold domains"/>
    <property type="match status" value="1"/>
</dbReference>
<protein>
    <recommendedName>
        <fullName>Uncharacterized oxidoreductase MT1595</fullName>
        <ecNumber>1.-.-.-</ecNumber>
    </recommendedName>
</protein>
<organism>
    <name type="scientific">Mycobacterium tuberculosis (strain CDC 1551 / Oshkosh)</name>
    <dbReference type="NCBI Taxonomy" id="83331"/>
    <lineage>
        <taxon>Bacteria</taxon>
        <taxon>Bacillati</taxon>
        <taxon>Actinomycetota</taxon>
        <taxon>Actinomycetes</taxon>
        <taxon>Mycobacteriales</taxon>
        <taxon>Mycobacteriaceae</taxon>
        <taxon>Mycobacterium</taxon>
        <taxon>Mycobacterium tuberculosis complex</taxon>
    </lineage>
</organism>
<comment type="similarity">
    <text evidence="3">Belongs to the short-chain dehydrogenases/reductases (SDR) family.</text>
</comment>
<comment type="sequence caution" evidence="3">
    <conflict type="erroneous initiation">
        <sequence resource="EMBL-CDS" id="AAK45861"/>
    </conflict>
</comment>
<evidence type="ECO:0000250" key="1"/>
<evidence type="ECO:0000256" key="2">
    <source>
        <dbReference type="SAM" id="MobiDB-lite"/>
    </source>
</evidence>
<evidence type="ECO:0000305" key="3"/>
<reference key="1">
    <citation type="journal article" date="2002" name="J. Bacteriol.">
        <title>Whole-genome comparison of Mycobacterium tuberculosis clinical and laboratory strains.</title>
        <authorList>
            <person name="Fleischmann R.D."/>
            <person name="Alland D."/>
            <person name="Eisen J.A."/>
            <person name="Carpenter L."/>
            <person name="White O."/>
            <person name="Peterson J.D."/>
            <person name="DeBoy R.T."/>
            <person name="Dodson R.J."/>
            <person name="Gwinn M.L."/>
            <person name="Haft D.H."/>
            <person name="Hickey E.K."/>
            <person name="Kolonay J.F."/>
            <person name="Nelson W.C."/>
            <person name="Umayam L.A."/>
            <person name="Ermolaeva M.D."/>
            <person name="Salzberg S.L."/>
            <person name="Delcher A."/>
            <person name="Utterback T.R."/>
            <person name="Weidman J.F."/>
            <person name="Khouri H.M."/>
            <person name="Gill J."/>
            <person name="Mikula A."/>
            <person name="Bishai W."/>
            <person name="Jacobs W.R. Jr."/>
            <person name="Venter J.C."/>
            <person name="Fraser C.M."/>
        </authorList>
    </citation>
    <scope>NUCLEOTIDE SEQUENCE [LARGE SCALE GENOMIC DNA]</scope>
    <source>
        <strain>CDC 1551 / Oshkosh</strain>
    </source>
</reference>